<comment type="function">
    <text evidence="1">Microtubule inner protein (MIP) part of the dynein-decorated doublet microtubules (DMTs) in cilia axoneme, which is required for motile cilia beating.</text>
</comment>
<comment type="subunit">
    <text evidence="4">Microtubule inner protein component of sperm flagellar doublet microtubules.</text>
</comment>
<comment type="subcellular location">
    <subcellularLocation>
        <location evidence="2">Cytoplasm</location>
        <location evidence="2">Cytoskeleton</location>
        <location evidence="2">Cilium axoneme</location>
    </subcellularLocation>
    <subcellularLocation>
        <location evidence="4">Cytoplasm</location>
        <location evidence="4">Cytoskeleton</location>
        <location evidence="4">Flagellum axoneme</location>
    </subcellularLocation>
</comment>
<comment type="similarity">
    <text evidence="5">Belongs to the CFAP144 family.</text>
</comment>
<evidence type="ECO:0000250" key="1">
    <source>
        <dbReference type="UniProtKB" id="A6NL82"/>
    </source>
</evidence>
<evidence type="ECO:0000250" key="2">
    <source>
        <dbReference type="UniProtKB" id="F1P3Y5"/>
    </source>
</evidence>
<evidence type="ECO:0000256" key="3">
    <source>
        <dbReference type="SAM" id="MobiDB-lite"/>
    </source>
</evidence>
<evidence type="ECO:0000269" key="4">
    <source>
    </source>
</evidence>
<evidence type="ECO:0000305" key="5"/>
<evidence type="ECO:0007744" key="6">
    <source>
        <dbReference type="PDB" id="8OTZ"/>
    </source>
</evidence>
<keyword id="KW-0002">3D-structure</keyword>
<keyword id="KW-0966">Cell projection</keyword>
<keyword id="KW-0969">Cilium</keyword>
<keyword id="KW-0963">Cytoplasm</keyword>
<keyword id="KW-0206">Cytoskeleton</keyword>
<keyword id="KW-0282">Flagellum</keyword>
<keyword id="KW-1185">Reference proteome</keyword>
<feature type="chain" id="PRO_0000340270" description="Cilia- and flagella-associated protein 144">
    <location>
        <begin position="1"/>
        <end position="135"/>
    </location>
</feature>
<feature type="region of interest" description="Disordered" evidence="3">
    <location>
        <begin position="75"/>
        <end position="100"/>
    </location>
</feature>
<protein>
    <recommendedName>
        <fullName>Cilia- and flagella-associated protein 144</fullName>
    </recommendedName>
    <alternativeName>
        <fullName>Protein FAM183A</fullName>
    </alternativeName>
</protein>
<name>CF144_BOVIN</name>
<reference key="1">
    <citation type="submission" date="2006-08" db="EMBL/GenBank/DDBJ databases">
        <authorList>
            <consortium name="NIH - Mammalian Gene Collection (MGC) project"/>
        </authorList>
    </citation>
    <scope>NUCLEOTIDE SEQUENCE [LARGE SCALE MRNA]</scope>
    <source>
        <strain>Crossbred X Angus</strain>
        <tissue>Liver</tissue>
    </source>
</reference>
<reference evidence="6" key="2">
    <citation type="journal article" date="2023" name="Cell">
        <title>Structural specializations of the sperm tail.</title>
        <authorList>
            <person name="Leung M.R."/>
            <person name="Zeng J."/>
            <person name="Wang X."/>
            <person name="Roelofs M.C."/>
            <person name="Huang W."/>
            <person name="Zenezini Chiozzi R."/>
            <person name="Hevler J.F."/>
            <person name="Heck A.J.R."/>
            <person name="Dutcher S.K."/>
            <person name="Brown A."/>
            <person name="Zhang R."/>
            <person name="Zeev-Ben-Mordehai T."/>
        </authorList>
    </citation>
    <scope>STRUCTURE BY ELECTRON MICROSCOPY (3.60 ANGSTROMS)</scope>
    <scope>SUBUNIT</scope>
    <scope>SUBCELLULAR LOCATION</scope>
</reference>
<sequence>MAGHQKEKAIADEVHQNQILRELYLKELRTQKLYTQYHVNPLRKVHTIARKPMSWHDNLEEPADARFLNLIHHAAQGPRKKYPETQTEGQEIGWDSEPLVNPQRDDRRLNHFRVYKDITLYKAKMWSLGEDDRHK</sequence>
<gene>
    <name type="primary">CFAP144</name>
    <name type="synonym">FAM183A</name>
</gene>
<dbReference type="EMBL" id="BC120463">
    <property type="protein sequence ID" value="AAI20464.1"/>
    <property type="molecule type" value="mRNA"/>
</dbReference>
<dbReference type="RefSeq" id="NP_001103562.1">
    <property type="nucleotide sequence ID" value="NM_001110092.2"/>
</dbReference>
<dbReference type="RefSeq" id="XP_024845549.1">
    <property type="nucleotide sequence ID" value="XM_024989781.2"/>
</dbReference>
<dbReference type="RefSeq" id="XP_059740899.1">
    <property type="nucleotide sequence ID" value="XM_059884916.1"/>
</dbReference>
<dbReference type="PDB" id="8OTZ">
    <property type="method" value="EM"/>
    <property type="resolution" value="3.60 A"/>
    <property type="chains" value="K1=1-135"/>
</dbReference>
<dbReference type="PDB" id="9CPB">
    <property type="method" value="EM"/>
    <property type="resolution" value="3.52 A"/>
    <property type="chains" value="4D=1-135"/>
</dbReference>
<dbReference type="PDBsum" id="8OTZ"/>
<dbReference type="PDBsum" id="9CPB"/>
<dbReference type="EMDB" id="EMD-17187"/>
<dbReference type="EMDB" id="EMD-45801"/>
<dbReference type="EMDB" id="EMD-50664"/>
<dbReference type="SMR" id="A8QW39"/>
<dbReference type="FunCoup" id="A8QW39">
    <property type="interactions" value="23"/>
</dbReference>
<dbReference type="STRING" id="9913.ENSBTAP00000033194"/>
<dbReference type="PaxDb" id="9913-ENSBTAP00000033194"/>
<dbReference type="GeneID" id="782130"/>
<dbReference type="KEGG" id="bta:782130"/>
<dbReference type="CTD" id="440585"/>
<dbReference type="VEuPathDB" id="HostDB:ENSBTAG00000037555"/>
<dbReference type="eggNOG" id="ENOG502RZSS">
    <property type="taxonomic scope" value="Eukaryota"/>
</dbReference>
<dbReference type="HOGENOM" id="CLU_155974_0_0_1"/>
<dbReference type="InParanoid" id="A8QW39"/>
<dbReference type="OMA" id="SQEIGWM"/>
<dbReference type="OrthoDB" id="446290at2759"/>
<dbReference type="TreeFam" id="TF329423"/>
<dbReference type="Proteomes" id="UP000009136">
    <property type="component" value="Chromosome 3"/>
</dbReference>
<dbReference type="Bgee" id="ENSBTAG00000037555">
    <property type="expression patterns" value="Expressed in oviduct epithelium and 49 other cell types or tissues"/>
</dbReference>
<dbReference type="GO" id="GO:0160112">
    <property type="term" value="C:axonemal B tubule inner sheath"/>
    <property type="evidence" value="ECO:0000250"/>
    <property type="project" value="UniProtKB"/>
</dbReference>
<dbReference type="GO" id="GO:0005879">
    <property type="term" value="C:axonemal microtubule"/>
    <property type="evidence" value="ECO:0000250"/>
    <property type="project" value="UniProtKB"/>
</dbReference>
<dbReference type="GO" id="GO:0097546">
    <property type="term" value="C:ciliary base"/>
    <property type="evidence" value="ECO:0000318"/>
    <property type="project" value="GO_Central"/>
</dbReference>
<dbReference type="GO" id="GO:0036126">
    <property type="term" value="C:sperm flagellum"/>
    <property type="evidence" value="ECO:0000250"/>
    <property type="project" value="UniProtKB"/>
</dbReference>
<dbReference type="GO" id="GO:0008017">
    <property type="term" value="F:microtubule binding"/>
    <property type="evidence" value="ECO:0000250"/>
    <property type="project" value="UniProtKB"/>
</dbReference>
<dbReference type="GO" id="GO:0030317">
    <property type="term" value="P:flagellated sperm motility"/>
    <property type="evidence" value="ECO:0000250"/>
    <property type="project" value="UniProtKB"/>
</dbReference>
<dbReference type="InterPro" id="IPR029214">
    <property type="entry name" value="CFAP144"/>
</dbReference>
<dbReference type="PANTHER" id="PTHR33865">
    <property type="entry name" value="PROTEIN FAM183B"/>
    <property type="match status" value="1"/>
</dbReference>
<dbReference type="PANTHER" id="PTHR33865:SF3">
    <property type="entry name" value="PROTEIN FAM183B"/>
    <property type="match status" value="1"/>
</dbReference>
<dbReference type="Pfam" id="PF14886">
    <property type="entry name" value="FAM183"/>
    <property type="match status" value="1"/>
</dbReference>
<organism>
    <name type="scientific">Bos taurus</name>
    <name type="common">Bovine</name>
    <dbReference type="NCBI Taxonomy" id="9913"/>
    <lineage>
        <taxon>Eukaryota</taxon>
        <taxon>Metazoa</taxon>
        <taxon>Chordata</taxon>
        <taxon>Craniata</taxon>
        <taxon>Vertebrata</taxon>
        <taxon>Euteleostomi</taxon>
        <taxon>Mammalia</taxon>
        <taxon>Eutheria</taxon>
        <taxon>Laurasiatheria</taxon>
        <taxon>Artiodactyla</taxon>
        <taxon>Ruminantia</taxon>
        <taxon>Pecora</taxon>
        <taxon>Bovidae</taxon>
        <taxon>Bovinae</taxon>
        <taxon>Bos</taxon>
    </lineage>
</organism>
<accession>A8QW39</accession>
<proteinExistence type="evidence at protein level"/>